<keyword id="KW-0997">Cell inner membrane</keyword>
<keyword id="KW-1003">Cell membrane</keyword>
<keyword id="KW-0249">Electron transport</keyword>
<keyword id="KW-0472">Membrane</keyword>
<keyword id="KW-1185">Reference proteome</keyword>
<keyword id="KW-1278">Translocase</keyword>
<keyword id="KW-0812">Transmembrane</keyword>
<keyword id="KW-1133">Transmembrane helix</keyword>
<keyword id="KW-0813">Transport</keyword>
<reference key="1">
    <citation type="journal article" date="2004" name="Proc. Natl. Acad. Sci. U.S.A.">
        <title>Genome sequence of the enterobacterial phytopathogen Erwinia carotovora subsp. atroseptica and characterization of virulence factors.</title>
        <authorList>
            <person name="Bell K.S."/>
            <person name="Sebaihia M."/>
            <person name="Pritchard L."/>
            <person name="Holden M.T.G."/>
            <person name="Hyman L.J."/>
            <person name="Holeva M.C."/>
            <person name="Thomson N.R."/>
            <person name="Bentley S.D."/>
            <person name="Churcher L.J.C."/>
            <person name="Mungall K."/>
            <person name="Atkin R."/>
            <person name="Bason N."/>
            <person name="Brooks K."/>
            <person name="Chillingworth T."/>
            <person name="Clark K."/>
            <person name="Doggett J."/>
            <person name="Fraser A."/>
            <person name="Hance Z."/>
            <person name="Hauser H."/>
            <person name="Jagels K."/>
            <person name="Moule S."/>
            <person name="Norbertczak H."/>
            <person name="Ormond D."/>
            <person name="Price C."/>
            <person name="Quail M.A."/>
            <person name="Sanders M."/>
            <person name="Walker D."/>
            <person name="Whitehead S."/>
            <person name="Salmond G.P.C."/>
            <person name="Birch P.R.J."/>
            <person name="Parkhill J."/>
            <person name="Toth I.K."/>
        </authorList>
    </citation>
    <scope>NUCLEOTIDE SEQUENCE [LARGE SCALE GENOMIC DNA]</scope>
    <source>
        <strain>SCRI 1043 / ATCC BAA-672</strain>
    </source>
</reference>
<dbReference type="EC" id="7.-.-.-" evidence="1"/>
<dbReference type="EMBL" id="BX950851">
    <property type="protein sequence ID" value="CAG75179.1"/>
    <property type="molecule type" value="Genomic_DNA"/>
</dbReference>
<dbReference type="SMR" id="Q6D4W4"/>
<dbReference type="STRING" id="218491.ECA2276"/>
<dbReference type="KEGG" id="eca:ECA2276"/>
<dbReference type="eggNOG" id="COG4657">
    <property type="taxonomic scope" value="Bacteria"/>
</dbReference>
<dbReference type="HOGENOM" id="CLU_095255_1_0_6"/>
<dbReference type="OrthoDB" id="9803631at2"/>
<dbReference type="Proteomes" id="UP000007966">
    <property type="component" value="Chromosome"/>
</dbReference>
<dbReference type="GO" id="GO:0005886">
    <property type="term" value="C:plasma membrane"/>
    <property type="evidence" value="ECO:0007669"/>
    <property type="project" value="UniProtKB-SubCell"/>
</dbReference>
<dbReference type="GO" id="GO:0022900">
    <property type="term" value="P:electron transport chain"/>
    <property type="evidence" value="ECO:0007669"/>
    <property type="project" value="UniProtKB-UniRule"/>
</dbReference>
<dbReference type="HAMAP" id="MF_00459">
    <property type="entry name" value="RsxA_RnfA"/>
    <property type="match status" value="1"/>
</dbReference>
<dbReference type="InterPro" id="IPR011293">
    <property type="entry name" value="Ion_transpt_RnfA/RsxA"/>
</dbReference>
<dbReference type="InterPro" id="IPR003667">
    <property type="entry name" value="NqrDE/RnfAE"/>
</dbReference>
<dbReference type="InterPro" id="IPR050133">
    <property type="entry name" value="NqrDE/RnfAE_oxidrdctase"/>
</dbReference>
<dbReference type="NCBIfam" id="NF003481">
    <property type="entry name" value="PRK05151.1"/>
    <property type="match status" value="1"/>
</dbReference>
<dbReference type="NCBIfam" id="TIGR01943">
    <property type="entry name" value="rnfA"/>
    <property type="match status" value="1"/>
</dbReference>
<dbReference type="PANTHER" id="PTHR30335">
    <property type="entry name" value="INTEGRAL MEMBRANE PROTEIN OF SOXR-REDUCING COMPLEX"/>
    <property type="match status" value="1"/>
</dbReference>
<dbReference type="PANTHER" id="PTHR30335:SF0">
    <property type="entry name" value="ION-TRANSLOCATING OXIDOREDUCTASE COMPLEX SUBUNIT A"/>
    <property type="match status" value="1"/>
</dbReference>
<dbReference type="Pfam" id="PF02508">
    <property type="entry name" value="Rnf-Nqr"/>
    <property type="match status" value="1"/>
</dbReference>
<dbReference type="PIRSF" id="PIRSF006102">
    <property type="entry name" value="NQR_DE"/>
    <property type="match status" value="1"/>
</dbReference>
<evidence type="ECO:0000255" key="1">
    <source>
        <dbReference type="HAMAP-Rule" id="MF_00459"/>
    </source>
</evidence>
<name>RNFA_PECAS</name>
<proteinExistence type="inferred from homology"/>
<feature type="chain" id="PRO_1000013529" description="Ion-translocating oxidoreductase complex subunit A">
    <location>
        <begin position="1"/>
        <end position="193"/>
    </location>
</feature>
<feature type="transmembrane region" description="Helical" evidence="1">
    <location>
        <begin position="5"/>
        <end position="25"/>
    </location>
</feature>
<feature type="transmembrane region" description="Helical" evidence="1">
    <location>
        <begin position="39"/>
        <end position="59"/>
    </location>
</feature>
<feature type="transmembrane region" description="Helical" evidence="1">
    <location>
        <begin position="62"/>
        <end position="82"/>
    </location>
</feature>
<feature type="transmembrane region" description="Helical" evidence="1">
    <location>
        <begin position="102"/>
        <end position="122"/>
    </location>
</feature>
<feature type="transmembrane region" description="Helical" evidence="1">
    <location>
        <begin position="134"/>
        <end position="154"/>
    </location>
</feature>
<feature type="transmembrane region" description="Helical" evidence="1">
    <location>
        <begin position="171"/>
        <end position="191"/>
    </location>
</feature>
<accession>Q6D4W4</accession>
<protein>
    <recommendedName>
        <fullName evidence="1">Ion-translocating oxidoreductase complex subunit A</fullName>
        <ecNumber evidence="1">7.-.-.-</ecNumber>
    </recommendedName>
    <alternativeName>
        <fullName evidence="1">Rnf electron transport complex subunit A</fullName>
    </alternativeName>
</protein>
<organism>
    <name type="scientific">Pectobacterium atrosepticum (strain SCRI 1043 / ATCC BAA-672)</name>
    <name type="common">Erwinia carotovora subsp. atroseptica</name>
    <dbReference type="NCBI Taxonomy" id="218491"/>
    <lineage>
        <taxon>Bacteria</taxon>
        <taxon>Pseudomonadati</taxon>
        <taxon>Pseudomonadota</taxon>
        <taxon>Gammaproteobacteria</taxon>
        <taxon>Enterobacterales</taxon>
        <taxon>Pectobacteriaceae</taxon>
        <taxon>Pectobacterium</taxon>
    </lineage>
</organism>
<gene>
    <name evidence="1" type="primary">rnfA</name>
    <name type="ordered locus">ECA2276</name>
</gene>
<comment type="function">
    <text evidence="1">Part of a membrane-bound complex that couples electron transfer with translocation of ions across the membrane.</text>
</comment>
<comment type="subunit">
    <text evidence="1">The complex is composed of six subunits: RnfA, RnfB, RnfC, RnfD, RnfE and RnfG.</text>
</comment>
<comment type="subcellular location">
    <subcellularLocation>
        <location evidence="1">Cell inner membrane</location>
        <topology evidence="1">Multi-pass membrane protein</topology>
    </subcellularLocation>
</comment>
<comment type="similarity">
    <text evidence="1">Belongs to the NqrDE/RnfAE family.</text>
</comment>
<sequence length="193" mass="21071">MTEYALLFVSILLVNNFVLVKFLGLCPFMGVSKKLETAIGMGMATTFVMTLGSMFSWLINEFILVPLDILYLRTMAFILVLAVVVQFSEMFVRKVSPELYRLLGIFLPLITTNCAVLGVVLLNINLSHGFLQSTIYGFGGAAGFSLVMVLFAAIRERLAVSDIPAPFRGSSIALITAGLMSLAFMGFTGLVKF</sequence>